<feature type="chain" id="PRO_0000132004" description="Cytidylate kinase">
    <location>
        <begin position="1"/>
        <end position="223"/>
    </location>
</feature>
<feature type="binding site" evidence="1">
    <location>
        <begin position="12"/>
        <end position="20"/>
    </location>
    <ligand>
        <name>ATP</name>
        <dbReference type="ChEBI" id="CHEBI:30616"/>
    </ligand>
</feature>
<protein>
    <recommendedName>
        <fullName evidence="1">Cytidylate kinase</fullName>
        <shortName evidence="1">CK</shortName>
        <ecNumber evidence="1">2.7.4.25</ecNumber>
    </recommendedName>
    <alternativeName>
        <fullName evidence="1">Cytidine monophosphate kinase</fullName>
        <shortName evidence="1">CMP kinase</shortName>
    </alternativeName>
</protein>
<accession>Q9PAQ6</accession>
<dbReference type="EC" id="2.7.4.25" evidence="1"/>
<dbReference type="EMBL" id="AE003849">
    <property type="protein sequence ID" value="AAF85238.1"/>
    <property type="molecule type" value="Genomic_DNA"/>
</dbReference>
<dbReference type="PIR" id="D82556">
    <property type="entry name" value="D82556"/>
</dbReference>
<dbReference type="RefSeq" id="WP_010894884.1">
    <property type="nucleotide sequence ID" value="NC_002488.3"/>
</dbReference>
<dbReference type="SMR" id="Q9PAQ6"/>
<dbReference type="STRING" id="160492.XF_2439"/>
<dbReference type="KEGG" id="xfa:XF_2439"/>
<dbReference type="eggNOG" id="COG0283">
    <property type="taxonomic scope" value="Bacteria"/>
</dbReference>
<dbReference type="HOGENOM" id="CLU_079959_2_0_6"/>
<dbReference type="Proteomes" id="UP000000812">
    <property type="component" value="Chromosome"/>
</dbReference>
<dbReference type="GO" id="GO:0005737">
    <property type="term" value="C:cytoplasm"/>
    <property type="evidence" value="ECO:0007669"/>
    <property type="project" value="UniProtKB-SubCell"/>
</dbReference>
<dbReference type="GO" id="GO:0005524">
    <property type="term" value="F:ATP binding"/>
    <property type="evidence" value="ECO:0007669"/>
    <property type="project" value="UniProtKB-UniRule"/>
</dbReference>
<dbReference type="GO" id="GO:0036430">
    <property type="term" value="F:CMP kinase activity"/>
    <property type="evidence" value="ECO:0007669"/>
    <property type="project" value="RHEA"/>
</dbReference>
<dbReference type="GO" id="GO:0036431">
    <property type="term" value="F:dCMP kinase activity"/>
    <property type="evidence" value="ECO:0007669"/>
    <property type="project" value="RHEA"/>
</dbReference>
<dbReference type="GO" id="GO:0006220">
    <property type="term" value="P:pyrimidine nucleotide metabolic process"/>
    <property type="evidence" value="ECO:0007669"/>
    <property type="project" value="UniProtKB-UniRule"/>
</dbReference>
<dbReference type="CDD" id="cd02020">
    <property type="entry name" value="CMPK"/>
    <property type="match status" value="1"/>
</dbReference>
<dbReference type="Gene3D" id="3.40.50.300">
    <property type="entry name" value="P-loop containing nucleotide triphosphate hydrolases"/>
    <property type="match status" value="1"/>
</dbReference>
<dbReference type="HAMAP" id="MF_00238">
    <property type="entry name" value="Cytidyl_kinase_type1"/>
    <property type="match status" value="1"/>
</dbReference>
<dbReference type="InterPro" id="IPR003136">
    <property type="entry name" value="Cytidylate_kin"/>
</dbReference>
<dbReference type="InterPro" id="IPR011994">
    <property type="entry name" value="Cytidylate_kinase_dom"/>
</dbReference>
<dbReference type="InterPro" id="IPR027417">
    <property type="entry name" value="P-loop_NTPase"/>
</dbReference>
<dbReference type="NCBIfam" id="TIGR00017">
    <property type="entry name" value="cmk"/>
    <property type="match status" value="1"/>
</dbReference>
<dbReference type="Pfam" id="PF02224">
    <property type="entry name" value="Cytidylate_kin"/>
    <property type="match status" value="1"/>
</dbReference>
<dbReference type="SUPFAM" id="SSF52540">
    <property type="entry name" value="P-loop containing nucleoside triphosphate hydrolases"/>
    <property type="match status" value="1"/>
</dbReference>
<keyword id="KW-0067">ATP-binding</keyword>
<keyword id="KW-0963">Cytoplasm</keyword>
<keyword id="KW-0418">Kinase</keyword>
<keyword id="KW-0547">Nucleotide-binding</keyword>
<keyword id="KW-0808">Transferase</keyword>
<reference key="1">
    <citation type="journal article" date="2000" name="Nature">
        <title>The genome sequence of the plant pathogen Xylella fastidiosa.</title>
        <authorList>
            <person name="Simpson A.J.G."/>
            <person name="Reinach F.C."/>
            <person name="Arruda P."/>
            <person name="Abreu F.A."/>
            <person name="Acencio M."/>
            <person name="Alvarenga R."/>
            <person name="Alves L.M.C."/>
            <person name="Araya J.E."/>
            <person name="Baia G.S."/>
            <person name="Baptista C.S."/>
            <person name="Barros M.H."/>
            <person name="Bonaccorsi E.D."/>
            <person name="Bordin S."/>
            <person name="Bove J.M."/>
            <person name="Briones M.R.S."/>
            <person name="Bueno M.R.P."/>
            <person name="Camargo A.A."/>
            <person name="Camargo L.E.A."/>
            <person name="Carraro D.M."/>
            <person name="Carrer H."/>
            <person name="Colauto N.B."/>
            <person name="Colombo C."/>
            <person name="Costa F.F."/>
            <person name="Costa M.C.R."/>
            <person name="Costa-Neto C.M."/>
            <person name="Coutinho L.L."/>
            <person name="Cristofani M."/>
            <person name="Dias-Neto E."/>
            <person name="Docena C."/>
            <person name="El-Dorry H."/>
            <person name="Facincani A.P."/>
            <person name="Ferreira A.J.S."/>
            <person name="Ferreira V.C.A."/>
            <person name="Ferro J.A."/>
            <person name="Fraga J.S."/>
            <person name="Franca S.C."/>
            <person name="Franco M.C."/>
            <person name="Frohme M."/>
            <person name="Furlan L.R."/>
            <person name="Garnier M."/>
            <person name="Goldman G.H."/>
            <person name="Goldman M.H.S."/>
            <person name="Gomes S.L."/>
            <person name="Gruber A."/>
            <person name="Ho P.L."/>
            <person name="Hoheisel J.D."/>
            <person name="Junqueira M.L."/>
            <person name="Kemper E.L."/>
            <person name="Kitajima J.P."/>
            <person name="Krieger J.E."/>
            <person name="Kuramae E.E."/>
            <person name="Laigret F."/>
            <person name="Lambais M.R."/>
            <person name="Leite L.C.C."/>
            <person name="Lemos E.G.M."/>
            <person name="Lemos M.V.F."/>
            <person name="Lopes S.A."/>
            <person name="Lopes C.R."/>
            <person name="Machado J.A."/>
            <person name="Machado M.A."/>
            <person name="Madeira A.M.B.N."/>
            <person name="Madeira H.M.F."/>
            <person name="Marino C.L."/>
            <person name="Marques M.V."/>
            <person name="Martins E.A.L."/>
            <person name="Martins E.M.F."/>
            <person name="Matsukuma A.Y."/>
            <person name="Menck C.F.M."/>
            <person name="Miracca E.C."/>
            <person name="Miyaki C.Y."/>
            <person name="Monteiro-Vitorello C.B."/>
            <person name="Moon D.H."/>
            <person name="Nagai M.A."/>
            <person name="Nascimento A.L.T.O."/>
            <person name="Netto L.E.S."/>
            <person name="Nhani A. Jr."/>
            <person name="Nobrega F.G."/>
            <person name="Nunes L.R."/>
            <person name="Oliveira M.A."/>
            <person name="de Oliveira M.C."/>
            <person name="de Oliveira R.C."/>
            <person name="Palmieri D.A."/>
            <person name="Paris A."/>
            <person name="Peixoto B.R."/>
            <person name="Pereira G.A.G."/>
            <person name="Pereira H.A. Jr."/>
            <person name="Pesquero J.B."/>
            <person name="Quaggio R.B."/>
            <person name="Roberto P.G."/>
            <person name="Rodrigues V."/>
            <person name="de Rosa A.J.M."/>
            <person name="de Rosa V.E. Jr."/>
            <person name="de Sa R.G."/>
            <person name="Santelli R.V."/>
            <person name="Sawasaki H.E."/>
            <person name="da Silva A.C.R."/>
            <person name="da Silva A.M."/>
            <person name="da Silva F.R."/>
            <person name="Silva W.A. Jr."/>
            <person name="da Silveira J.F."/>
            <person name="Silvestri M.L.Z."/>
            <person name="Siqueira W.J."/>
            <person name="de Souza A.A."/>
            <person name="de Souza A.P."/>
            <person name="Terenzi M.F."/>
            <person name="Truffi D."/>
            <person name="Tsai S.M."/>
            <person name="Tsuhako M.H."/>
            <person name="Vallada H."/>
            <person name="Van Sluys M.A."/>
            <person name="Verjovski-Almeida S."/>
            <person name="Vettore A.L."/>
            <person name="Zago M.A."/>
            <person name="Zatz M."/>
            <person name="Meidanis J."/>
            <person name="Setubal J.C."/>
        </authorList>
    </citation>
    <scope>NUCLEOTIDE SEQUENCE [LARGE SCALE GENOMIC DNA]</scope>
    <source>
        <strain>9a5c</strain>
    </source>
</reference>
<sequence>MADLVPVLTIDGPSGVGKGTVSKIVAARLGWHYLDSGALYRAVAVAADWTAVDVSDTTALVKCAFDTCVNFAKCADGEMRVLVNAIDATDVLRMETTGVLASTIAAISEVRAALKERQQMFRRTPGLVADGRDMGTVIFPDAQYKVFLTAKAEERAQRRYKQLMKKGVSVMLGALLEEIRARDARDACRSVAPLKPADDALLIDSTCMEVDEVVAQVLALVTD</sequence>
<organism>
    <name type="scientific">Xylella fastidiosa (strain 9a5c)</name>
    <dbReference type="NCBI Taxonomy" id="160492"/>
    <lineage>
        <taxon>Bacteria</taxon>
        <taxon>Pseudomonadati</taxon>
        <taxon>Pseudomonadota</taxon>
        <taxon>Gammaproteobacteria</taxon>
        <taxon>Lysobacterales</taxon>
        <taxon>Lysobacteraceae</taxon>
        <taxon>Xylella</taxon>
    </lineage>
</organism>
<proteinExistence type="inferred from homology"/>
<gene>
    <name evidence="1" type="primary">cmk</name>
    <name type="ordered locus">XF_2439</name>
</gene>
<name>KCY_XYLFA</name>
<evidence type="ECO:0000255" key="1">
    <source>
        <dbReference type="HAMAP-Rule" id="MF_00238"/>
    </source>
</evidence>
<comment type="catalytic activity">
    <reaction evidence="1">
        <text>CMP + ATP = CDP + ADP</text>
        <dbReference type="Rhea" id="RHEA:11600"/>
        <dbReference type="ChEBI" id="CHEBI:30616"/>
        <dbReference type="ChEBI" id="CHEBI:58069"/>
        <dbReference type="ChEBI" id="CHEBI:60377"/>
        <dbReference type="ChEBI" id="CHEBI:456216"/>
        <dbReference type="EC" id="2.7.4.25"/>
    </reaction>
</comment>
<comment type="catalytic activity">
    <reaction evidence="1">
        <text>dCMP + ATP = dCDP + ADP</text>
        <dbReference type="Rhea" id="RHEA:25094"/>
        <dbReference type="ChEBI" id="CHEBI:30616"/>
        <dbReference type="ChEBI" id="CHEBI:57566"/>
        <dbReference type="ChEBI" id="CHEBI:58593"/>
        <dbReference type="ChEBI" id="CHEBI:456216"/>
        <dbReference type="EC" id="2.7.4.25"/>
    </reaction>
</comment>
<comment type="subcellular location">
    <subcellularLocation>
        <location evidence="1">Cytoplasm</location>
    </subcellularLocation>
</comment>
<comment type="similarity">
    <text evidence="1">Belongs to the cytidylate kinase family. Type 1 subfamily.</text>
</comment>